<keyword id="KW-0249">Electron transport</keyword>
<keyword id="KW-0349">Heme</keyword>
<keyword id="KW-0408">Iron</keyword>
<keyword id="KW-0472">Membrane</keyword>
<keyword id="KW-0479">Metal-binding</keyword>
<keyword id="KW-0496">Mitochondrion</keyword>
<keyword id="KW-0999">Mitochondrion inner membrane</keyword>
<keyword id="KW-0679">Respiratory chain</keyword>
<keyword id="KW-0812">Transmembrane</keyword>
<keyword id="KW-1133">Transmembrane helix</keyword>
<keyword id="KW-0813">Transport</keyword>
<keyword id="KW-0830">Ubiquinone</keyword>
<proteinExistence type="inferred from homology"/>
<name>CYB_SMIMU</name>
<sequence>MINLRKTHPLMKIINHSFIDLPAPSNISAWWNFGSLLGICLVIQILTGLFLAMHYTSDTLTAFSSVAHICRDVNYGWLIRNLHANGASMFFMCLFLHVGRGIYYGSYLYKETWNIGVILLLTVMATAFVGYVLPWGQMSFWGATVITNLLSAIPYIGTTLAEWIWGGFAVDKATLTRFFAFHFILPFIIMALVIVHLLFLHETGSNNPSGINPDSDKIPFHPHYTIKDALGWMLLLLVLLFLALFSPDSLGDPDNFSPANPLNTPPHIKPEWYFLFAYAILRSIPNKLGGVLALLASILILLIIPLLHTANQRSMMFRPVSQTLFWILTANLMTLTWIGGQPVEQPFIIIGQLASILYFSLILILMPLAGMFENYMLEPKR</sequence>
<dbReference type="EMBL" id="U07594">
    <property type="protein sequence ID" value="AAB88770.1"/>
    <property type="molecule type" value="Genomic_DNA"/>
</dbReference>
<dbReference type="SMR" id="Q35886"/>
<dbReference type="GO" id="GO:0005743">
    <property type="term" value="C:mitochondrial inner membrane"/>
    <property type="evidence" value="ECO:0007669"/>
    <property type="project" value="UniProtKB-SubCell"/>
</dbReference>
<dbReference type="GO" id="GO:0045275">
    <property type="term" value="C:respiratory chain complex III"/>
    <property type="evidence" value="ECO:0007669"/>
    <property type="project" value="InterPro"/>
</dbReference>
<dbReference type="GO" id="GO:0046872">
    <property type="term" value="F:metal ion binding"/>
    <property type="evidence" value="ECO:0007669"/>
    <property type="project" value="UniProtKB-KW"/>
</dbReference>
<dbReference type="GO" id="GO:0008121">
    <property type="term" value="F:ubiquinol-cytochrome-c reductase activity"/>
    <property type="evidence" value="ECO:0007669"/>
    <property type="project" value="InterPro"/>
</dbReference>
<dbReference type="GO" id="GO:0006122">
    <property type="term" value="P:mitochondrial electron transport, ubiquinol to cytochrome c"/>
    <property type="evidence" value="ECO:0007669"/>
    <property type="project" value="TreeGrafter"/>
</dbReference>
<dbReference type="CDD" id="cd00290">
    <property type="entry name" value="cytochrome_b_C"/>
    <property type="match status" value="1"/>
</dbReference>
<dbReference type="CDD" id="cd00284">
    <property type="entry name" value="Cytochrome_b_N"/>
    <property type="match status" value="1"/>
</dbReference>
<dbReference type="FunFam" id="1.20.810.10:FF:000002">
    <property type="entry name" value="Cytochrome b"/>
    <property type="match status" value="1"/>
</dbReference>
<dbReference type="Gene3D" id="1.20.810.10">
    <property type="entry name" value="Cytochrome Bc1 Complex, Chain C"/>
    <property type="match status" value="1"/>
</dbReference>
<dbReference type="InterPro" id="IPR005798">
    <property type="entry name" value="Cyt_b/b6_C"/>
</dbReference>
<dbReference type="InterPro" id="IPR036150">
    <property type="entry name" value="Cyt_b/b6_C_sf"/>
</dbReference>
<dbReference type="InterPro" id="IPR005797">
    <property type="entry name" value="Cyt_b/b6_N"/>
</dbReference>
<dbReference type="InterPro" id="IPR027387">
    <property type="entry name" value="Cytb/b6-like_sf"/>
</dbReference>
<dbReference type="InterPro" id="IPR030689">
    <property type="entry name" value="Cytochrome_b"/>
</dbReference>
<dbReference type="InterPro" id="IPR048260">
    <property type="entry name" value="Cytochrome_b_C_euk/bac"/>
</dbReference>
<dbReference type="InterPro" id="IPR048259">
    <property type="entry name" value="Cytochrome_b_N_euk/bac"/>
</dbReference>
<dbReference type="InterPro" id="IPR016174">
    <property type="entry name" value="Di-haem_cyt_TM"/>
</dbReference>
<dbReference type="PANTHER" id="PTHR19271">
    <property type="entry name" value="CYTOCHROME B"/>
    <property type="match status" value="1"/>
</dbReference>
<dbReference type="PANTHER" id="PTHR19271:SF16">
    <property type="entry name" value="CYTOCHROME B"/>
    <property type="match status" value="1"/>
</dbReference>
<dbReference type="Pfam" id="PF00032">
    <property type="entry name" value="Cytochrom_B_C"/>
    <property type="match status" value="1"/>
</dbReference>
<dbReference type="Pfam" id="PF00033">
    <property type="entry name" value="Cytochrome_B"/>
    <property type="match status" value="1"/>
</dbReference>
<dbReference type="PIRSF" id="PIRSF038885">
    <property type="entry name" value="COB"/>
    <property type="match status" value="1"/>
</dbReference>
<dbReference type="SUPFAM" id="SSF81648">
    <property type="entry name" value="a domain/subunit of cytochrome bc1 complex (Ubiquinol-cytochrome c reductase)"/>
    <property type="match status" value="1"/>
</dbReference>
<dbReference type="SUPFAM" id="SSF81342">
    <property type="entry name" value="Transmembrane di-heme cytochromes"/>
    <property type="match status" value="1"/>
</dbReference>
<dbReference type="PROSITE" id="PS51003">
    <property type="entry name" value="CYTB_CTER"/>
    <property type="match status" value="1"/>
</dbReference>
<dbReference type="PROSITE" id="PS51002">
    <property type="entry name" value="CYTB_NTER"/>
    <property type="match status" value="1"/>
</dbReference>
<evidence type="ECO:0000250" key="1"/>
<evidence type="ECO:0000250" key="2">
    <source>
        <dbReference type="UniProtKB" id="P00157"/>
    </source>
</evidence>
<evidence type="ECO:0000255" key="3">
    <source>
        <dbReference type="PROSITE-ProRule" id="PRU00967"/>
    </source>
</evidence>
<evidence type="ECO:0000255" key="4">
    <source>
        <dbReference type="PROSITE-ProRule" id="PRU00968"/>
    </source>
</evidence>
<gene>
    <name type="primary">MT-CYB</name>
    <name type="synonym">COB</name>
    <name type="synonym">CYTB</name>
    <name type="synonym">MTCYB</name>
</gene>
<reference key="1">
    <citation type="journal article" date="1994" name="J. Mammal. Evol.">
        <title>Phylogenetic structure of the marsupial family Dasyuridae based on cytochrome-b DNA sequences.</title>
        <authorList>
            <person name="Krajewski C."/>
            <person name="Painter J."/>
            <person name="Buckley L."/>
            <person name="Westerman M."/>
        </authorList>
    </citation>
    <scope>NUCLEOTIDE SEQUENCE [GENOMIC DNA]</scope>
</reference>
<comment type="function">
    <text evidence="2">Component of the ubiquinol-cytochrome c reductase complex (complex III or cytochrome b-c1 complex) that is part of the mitochondrial respiratory chain. The b-c1 complex mediates electron transfer from ubiquinol to cytochrome c. Contributes to the generation of a proton gradient across the mitochondrial membrane that is then used for ATP synthesis.</text>
</comment>
<comment type="cofactor">
    <cofactor evidence="2">
        <name>heme b</name>
        <dbReference type="ChEBI" id="CHEBI:60344"/>
    </cofactor>
    <text evidence="2">Binds 2 heme b groups non-covalently.</text>
</comment>
<comment type="subunit">
    <text evidence="2">The cytochrome bc1 complex contains 11 subunits: 3 respiratory subunits (MT-CYB, CYC1 and UQCRFS1), 2 core proteins (UQCRC1 and UQCRC2) and 6 low-molecular weight proteins (UQCRH/QCR6, UQCRB/QCR7, UQCRQ/QCR8, UQCR10/QCR9, UQCR11/QCR10 and a cleavage product of UQCRFS1). This cytochrome bc1 complex then forms a dimer.</text>
</comment>
<comment type="subcellular location">
    <subcellularLocation>
        <location evidence="2">Mitochondrion inner membrane</location>
        <topology evidence="2">Multi-pass membrane protein</topology>
    </subcellularLocation>
</comment>
<comment type="miscellaneous">
    <text evidence="1">Heme 1 (or BL or b562) is low-potential and absorbs at about 562 nm, and heme 2 (or BH or b566) is high-potential and absorbs at about 566 nm.</text>
</comment>
<comment type="similarity">
    <text evidence="3 4">Belongs to the cytochrome b family.</text>
</comment>
<comment type="caution">
    <text evidence="2">The full-length protein contains only eight transmembrane helices, not nine as predicted by bioinformatics tools.</text>
</comment>
<protein>
    <recommendedName>
        <fullName>Cytochrome b</fullName>
    </recommendedName>
    <alternativeName>
        <fullName>Complex III subunit 3</fullName>
    </alternativeName>
    <alternativeName>
        <fullName>Complex III subunit III</fullName>
    </alternativeName>
    <alternativeName>
        <fullName>Cytochrome b-c1 complex subunit 3</fullName>
    </alternativeName>
    <alternativeName>
        <fullName>Ubiquinol-cytochrome-c reductase complex cytochrome b subunit</fullName>
    </alternativeName>
</protein>
<geneLocation type="mitochondrion"/>
<accession>Q35886</accession>
<feature type="chain" id="PRO_0000061545" description="Cytochrome b">
    <location>
        <begin position="1"/>
        <end position="381"/>
    </location>
</feature>
<feature type="transmembrane region" description="Helical" evidence="2">
    <location>
        <begin position="33"/>
        <end position="53"/>
    </location>
</feature>
<feature type="transmembrane region" description="Helical" evidence="2">
    <location>
        <begin position="77"/>
        <end position="98"/>
    </location>
</feature>
<feature type="transmembrane region" description="Helical" evidence="2">
    <location>
        <begin position="113"/>
        <end position="133"/>
    </location>
</feature>
<feature type="transmembrane region" description="Helical" evidence="2">
    <location>
        <begin position="178"/>
        <end position="198"/>
    </location>
</feature>
<feature type="transmembrane region" description="Helical" evidence="2">
    <location>
        <begin position="226"/>
        <end position="246"/>
    </location>
</feature>
<feature type="transmembrane region" description="Helical" evidence="2">
    <location>
        <begin position="288"/>
        <end position="308"/>
    </location>
</feature>
<feature type="transmembrane region" description="Helical" evidence="2">
    <location>
        <begin position="320"/>
        <end position="340"/>
    </location>
</feature>
<feature type="transmembrane region" description="Helical" evidence="2">
    <location>
        <begin position="347"/>
        <end position="367"/>
    </location>
</feature>
<feature type="binding site" description="axial binding residue" evidence="2">
    <location>
        <position position="83"/>
    </location>
    <ligand>
        <name>heme b</name>
        <dbReference type="ChEBI" id="CHEBI:60344"/>
        <label>b562</label>
    </ligand>
    <ligandPart>
        <name>Fe</name>
        <dbReference type="ChEBI" id="CHEBI:18248"/>
    </ligandPart>
</feature>
<feature type="binding site" description="axial binding residue" evidence="2">
    <location>
        <position position="97"/>
    </location>
    <ligand>
        <name>heme b</name>
        <dbReference type="ChEBI" id="CHEBI:60344"/>
        <label>b566</label>
    </ligand>
    <ligandPart>
        <name>Fe</name>
        <dbReference type="ChEBI" id="CHEBI:18248"/>
    </ligandPart>
</feature>
<feature type="binding site" description="axial binding residue" evidence="2">
    <location>
        <position position="182"/>
    </location>
    <ligand>
        <name>heme b</name>
        <dbReference type="ChEBI" id="CHEBI:60344"/>
        <label>b562</label>
    </ligand>
    <ligandPart>
        <name>Fe</name>
        <dbReference type="ChEBI" id="CHEBI:18248"/>
    </ligandPart>
</feature>
<feature type="binding site" description="axial binding residue" evidence="2">
    <location>
        <position position="196"/>
    </location>
    <ligand>
        <name>heme b</name>
        <dbReference type="ChEBI" id="CHEBI:60344"/>
        <label>b566</label>
    </ligand>
    <ligandPart>
        <name>Fe</name>
        <dbReference type="ChEBI" id="CHEBI:18248"/>
    </ligandPart>
</feature>
<feature type="binding site" evidence="2">
    <location>
        <position position="201"/>
    </location>
    <ligand>
        <name>a ubiquinone</name>
        <dbReference type="ChEBI" id="CHEBI:16389"/>
    </ligand>
</feature>
<organism>
    <name type="scientific">Sminthopsis murina</name>
    <name type="common">Slender-tailed dunnart</name>
    <name type="synonym">Narrow-footed marsupial mouse</name>
    <dbReference type="NCBI Taxonomy" id="32560"/>
    <lineage>
        <taxon>Eukaryota</taxon>
        <taxon>Metazoa</taxon>
        <taxon>Chordata</taxon>
        <taxon>Craniata</taxon>
        <taxon>Vertebrata</taxon>
        <taxon>Euteleostomi</taxon>
        <taxon>Mammalia</taxon>
        <taxon>Metatheria</taxon>
        <taxon>Dasyuromorphia</taxon>
        <taxon>Dasyuridae</taxon>
        <taxon>Sminthopsis</taxon>
    </lineage>
</organism>